<feature type="chain" id="PRO_0000148837" description="Aspartyl/glutamyl-tRNA(Asn/Gln) amidotransferase subunit B">
    <location>
        <begin position="1"/>
        <end position="475"/>
    </location>
</feature>
<keyword id="KW-0067">ATP-binding</keyword>
<keyword id="KW-0436">Ligase</keyword>
<keyword id="KW-0547">Nucleotide-binding</keyword>
<keyword id="KW-0648">Protein biosynthesis</keyword>
<comment type="function">
    <text evidence="1">Allows the formation of correctly charged Asn-tRNA(Asn) or Gln-tRNA(Gln) through the transamidation of misacylated Asp-tRNA(Asn) or Glu-tRNA(Gln) in organisms which lack either or both of asparaginyl-tRNA or glutaminyl-tRNA synthetases. The reaction takes place in the presence of glutamine and ATP through an activated phospho-Asp-tRNA(Asn) or phospho-Glu-tRNA(Gln).</text>
</comment>
<comment type="catalytic activity">
    <reaction evidence="1">
        <text>L-glutamyl-tRNA(Gln) + L-glutamine + ATP + H2O = L-glutaminyl-tRNA(Gln) + L-glutamate + ADP + phosphate + H(+)</text>
        <dbReference type="Rhea" id="RHEA:17521"/>
        <dbReference type="Rhea" id="RHEA-COMP:9681"/>
        <dbReference type="Rhea" id="RHEA-COMP:9684"/>
        <dbReference type="ChEBI" id="CHEBI:15377"/>
        <dbReference type="ChEBI" id="CHEBI:15378"/>
        <dbReference type="ChEBI" id="CHEBI:29985"/>
        <dbReference type="ChEBI" id="CHEBI:30616"/>
        <dbReference type="ChEBI" id="CHEBI:43474"/>
        <dbReference type="ChEBI" id="CHEBI:58359"/>
        <dbReference type="ChEBI" id="CHEBI:78520"/>
        <dbReference type="ChEBI" id="CHEBI:78521"/>
        <dbReference type="ChEBI" id="CHEBI:456216"/>
    </reaction>
</comment>
<comment type="catalytic activity">
    <reaction evidence="1">
        <text>L-aspartyl-tRNA(Asn) + L-glutamine + ATP + H2O = L-asparaginyl-tRNA(Asn) + L-glutamate + ADP + phosphate + 2 H(+)</text>
        <dbReference type="Rhea" id="RHEA:14513"/>
        <dbReference type="Rhea" id="RHEA-COMP:9674"/>
        <dbReference type="Rhea" id="RHEA-COMP:9677"/>
        <dbReference type="ChEBI" id="CHEBI:15377"/>
        <dbReference type="ChEBI" id="CHEBI:15378"/>
        <dbReference type="ChEBI" id="CHEBI:29985"/>
        <dbReference type="ChEBI" id="CHEBI:30616"/>
        <dbReference type="ChEBI" id="CHEBI:43474"/>
        <dbReference type="ChEBI" id="CHEBI:58359"/>
        <dbReference type="ChEBI" id="CHEBI:78515"/>
        <dbReference type="ChEBI" id="CHEBI:78516"/>
        <dbReference type="ChEBI" id="CHEBI:456216"/>
    </reaction>
</comment>
<comment type="subunit">
    <text evidence="1">Heterotrimer of A, B and C subunits.</text>
</comment>
<comment type="similarity">
    <text evidence="1">Belongs to the GatB/GatE family. GatB subfamily.</text>
</comment>
<reference key="1">
    <citation type="journal article" date="2004" name="Proc. Natl. Acad. Sci. U.S.A.">
        <title>Complete genomes of two clinical Staphylococcus aureus strains: evidence for the rapid evolution of virulence and drug resistance.</title>
        <authorList>
            <person name="Holden M.T.G."/>
            <person name="Feil E.J."/>
            <person name="Lindsay J.A."/>
            <person name="Peacock S.J."/>
            <person name="Day N.P.J."/>
            <person name="Enright M.C."/>
            <person name="Foster T.J."/>
            <person name="Moore C.E."/>
            <person name="Hurst L."/>
            <person name="Atkin R."/>
            <person name="Barron A."/>
            <person name="Bason N."/>
            <person name="Bentley S.D."/>
            <person name="Chillingworth C."/>
            <person name="Chillingworth T."/>
            <person name="Churcher C."/>
            <person name="Clark L."/>
            <person name="Corton C."/>
            <person name="Cronin A."/>
            <person name="Doggett J."/>
            <person name="Dowd L."/>
            <person name="Feltwell T."/>
            <person name="Hance Z."/>
            <person name="Harris B."/>
            <person name="Hauser H."/>
            <person name="Holroyd S."/>
            <person name="Jagels K."/>
            <person name="James K.D."/>
            <person name="Lennard N."/>
            <person name="Line A."/>
            <person name="Mayes R."/>
            <person name="Moule S."/>
            <person name="Mungall K."/>
            <person name="Ormond D."/>
            <person name="Quail M.A."/>
            <person name="Rabbinowitsch E."/>
            <person name="Rutherford K.M."/>
            <person name="Sanders M."/>
            <person name="Sharp S."/>
            <person name="Simmonds M."/>
            <person name="Stevens K."/>
            <person name="Whitehead S."/>
            <person name="Barrell B.G."/>
            <person name="Spratt B.G."/>
            <person name="Parkhill J."/>
        </authorList>
    </citation>
    <scope>NUCLEOTIDE SEQUENCE [LARGE SCALE GENOMIC DNA]</scope>
    <source>
        <strain>MSSA476</strain>
    </source>
</reference>
<evidence type="ECO:0000255" key="1">
    <source>
        <dbReference type="HAMAP-Rule" id="MF_00121"/>
    </source>
</evidence>
<gene>
    <name evidence="1" type="primary">gatB</name>
    <name type="ordered locus">SAS1822</name>
</gene>
<accession>Q6G834</accession>
<proteinExistence type="inferred from homology"/>
<name>GATB_STAAS</name>
<organism>
    <name type="scientific">Staphylococcus aureus (strain MSSA476)</name>
    <dbReference type="NCBI Taxonomy" id="282459"/>
    <lineage>
        <taxon>Bacteria</taxon>
        <taxon>Bacillati</taxon>
        <taxon>Bacillota</taxon>
        <taxon>Bacilli</taxon>
        <taxon>Bacillales</taxon>
        <taxon>Staphylococcaceae</taxon>
        <taxon>Staphylococcus</taxon>
    </lineage>
</organism>
<sequence>MHFETVIGLEVHVELKTDSKMFSPSPAHFGAEPNSNTNVIDLAYPGVLPVVNKRAVDWAMRAAMALNMEIATESKFDRKNYFYPDNPKAYQISQFDQPIGENGYIDIEVDGETKRIGITRLHMEEDAGKSTHKGEYSLVDLNRQGTPLIEIVSEPDIRSPKEAYAYLEKLRSIIQYTGVSDVKMEEGSLRCDANISLRPYGQEKFGTKAELKNLNSFNYVRKGLEYEEKRQEEELLNGGEIGQETRRFDESTGKTILMRVKEGSDDYRYFPEPDIVPLYIDDAWKERVRQTIPELPDERKAKYVNELGLPAYDAHVLTLTKEMSDFFESTIEHGADVKLTSNWLMGGVNEYLNKNQVELLDTKLTPENLAGMIKLIEDGTMSSKIAKKVFPELAAKGGNAKQIMEDNGLVQISDEATLLKFVNEALDNNEQSVEDYKNGKGKAMGFLVGQIMKASKGQANPQLVNQLLKQELDKR</sequence>
<dbReference type="EC" id="6.3.5.-" evidence="1"/>
<dbReference type="EMBL" id="BX571857">
    <property type="protein sequence ID" value="CAG43627.1"/>
    <property type="molecule type" value="Genomic_DNA"/>
</dbReference>
<dbReference type="RefSeq" id="WP_000545370.1">
    <property type="nucleotide sequence ID" value="NC_002953.3"/>
</dbReference>
<dbReference type="SMR" id="Q6G834"/>
<dbReference type="KEGG" id="sas:SAS1822"/>
<dbReference type="HOGENOM" id="CLU_019240_0_0_9"/>
<dbReference type="GO" id="GO:0050566">
    <property type="term" value="F:asparaginyl-tRNA synthase (glutamine-hydrolyzing) activity"/>
    <property type="evidence" value="ECO:0007669"/>
    <property type="project" value="RHEA"/>
</dbReference>
<dbReference type="GO" id="GO:0005524">
    <property type="term" value="F:ATP binding"/>
    <property type="evidence" value="ECO:0007669"/>
    <property type="project" value="UniProtKB-KW"/>
</dbReference>
<dbReference type="GO" id="GO:0050567">
    <property type="term" value="F:glutaminyl-tRNA synthase (glutamine-hydrolyzing) activity"/>
    <property type="evidence" value="ECO:0007669"/>
    <property type="project" value="UniProtKB-UniRule"/>
</dbReference>
<dbReference type="GO" id="GO:0070681">
    <property type="term" value="P:glutaminyl-tRNAGln biosynthesis via transamidation"/>
    <property type="evidence" value="ECO:0007669"/>
    <property type="project" value="TreeGrafter"/>
</dbReference>
<dbReference type="GO" id="GO:0006412">
    <property type="term" value="P:translation"/>
    <property type="evidence" value="ECO:0007669"/>
    <property type="project" value="UniProtKB-UniRule"/>
</dbReference>
<dbReference type="FunFam" id="1.10.10.410:FF:000001">
    <property type="entry name" value="Aspartyl/glutamyl-tRNA(Asn/Gln) amidotransferase subunit B"/>
    <property type="match status" value="1"/>
</dbReference>
<dbReference type="FunFam" id="1.10.150.380:FF:000001">
    <property type="entry name" value="Aspartyl/glutamyl-tRNA(Asn/Gln) amidotransferase subunit B"/>
    <property type="match status" value="1"/>
</dbReference>
<dbReference type="Gene3D" id="1.10.10.410">
    <property type="match status" value="1"/>
</dbReference>
<dbReference type="Gene3D" id="1.10.150.380">
    <property type="entry name" value="GatB domain, N-terminal subdomain"/>
    <property type="match status" value="1"/>
</dbReference>
<dbReference type="HAMAP" id="MF_00121">
    <property type="entry name" value="GatB"/>
    <property type="match status" value="1"/>
</dbReference>
<dbReference type="InterPro" id="IPR017959">
    <property type="entry name" value="Asn/Gln-tRNA_amidoTrfase_suB/E"/>
</dbReference>
<dbReference type="InterPro" id="IPR006075">
    <property type="entry name" value="Asn/Gln-tRNA_Trfase_suB/E_cat"/>
</dbReference>
<dbReference type="InterPro" id="IPR018027">
    <property type="entry name" value="Asn/Gln_amidotransferase"/>
</dbReference>
<dbReference type="InterPro" id="IPR003789">
    <property type="entry name" value="Asn/Gln_tRNA_amidoTrase-B-like"/>
</dbReference>
<dbReference type="InterPro" id="IPR004413">
    <property type="entry name" value="GatB"/>
</dbReference>
<dbReference type="InterPro" id="IPR042114">
    <property type="entry name" value="GatB_C_1"/>
</dbReference>
<dbReference type="InterPro" id="IPR023168">
    <property type="entry name" value="GatB_Yqey_C_2"/>
</dbReference>
<dbReference type="InterPro" id="IPR017958">
    <property type="entry name" value="Gln-tRNA_amidoTrfase_suB_CS"/>
</dbReference>
<dbReference type="InterPro" id="IPR014746">
    <property type="entry name" value="Gln_synth/guanido_kin_cat_dom"/>
</dbReference>
<dbReference type="NCBIfam" id="TIGR00133">
    <property type="entry name" value="gatB"/>
    <property type="match status" value="1"/>
</dbReference>
<dbReference type="NCBIfam" id="NF004011">
    <property type="entry name" value="PRK05477.1-1"/>
    <property type="match status" value="1"/>
</dbReference>
<dbReference type="NCBIfam" id="NF004012">
    <property type="entry name" value="PRK05477.1-2"/>
    <property type="match status" value="1"/>
</dbReference>
<dbReference type="NCBIfam" id="NF004014">
    <property type="entry name" value="PRK05477.1-4"/>
    <property type="match status" value="1"/>
</dbReference>
<dbReference type="PANTHER" id="PTHR11659">
    <property type="entry name" value="GLUTAMYL-TRNA GLN AMIDOTRANSFERASE SUBUNIT B MITOCHONDRIAL AND PROKARYOTIC PET112-RELATED"/>
    <property type="match status" value="1"/>
</dbReference>
<dbReference type="PANTHER" id="PTHR11659:SF0">
    <property type="entry name" value="GLUTAMYL-TRNA(GLN) AMIDOTRANSFERASE SUBUNIT B, MITOCHONDRIAL"/>
    <property type="match status" value="1"/>
</dbReference>
<dbReference type="Pfam" id="PF02934">
    <property type="entry name" value="GatB_N"/>
    <property type="match status" value="1"/>
</dbReference>
<dbReference type="Pfam" id="PF02637">
    <property type="entry name" value="GatB_Yqey"/>
    <property type="match status" value="1"/>
</dbReference>
<dbReference type="SMART" id="SM00845">
    <property type="entry name" value="GatB_Yqey"/>
    <property type="match status" value="1"/>
</dbReference>
<dbReference type="SUPFAM" id="SSF89095">
    <property type="entry name" value="GatB/YqeY motif"/>
    <property type="match status" value="1"/>
</dbReference>
<dbReference type="SUPFAM" id="SSF55931">
    <property type="entry name" value="Glutamine synthetase/guanido kinase"/>
    <property type="match status" value="1"/>
</dbReference>
<dbReference type="PROSITE" id="PS01234">
    <property type="entry name" value="GATB"/>
    <property type="match status" value="1"/>
</dbReference>
<protein>
    <recommendedName>
        <fullName evidence="1">Aspartyl/glutamyl-tRNA(Asn/Gln) amidotransferase subunit B</fullName>
        <shortName evidence="1">Asp/Glu-ADT subunit B</shortName>
        <ecNumber evidence="1">6.3.5.-</ecNumber>
    </recommendedName>
</protein>